<keyword id="KW-0030">Aminoacyl-tRNA synthetase</keyword>
<keyword id="KW-0067">ATP-binding</keyword>
<keyword id="KW-0963">Cytoplasm</keyword>
<keyword id="KW-0436">Ligase</keyword>
<keyword id="KW-0460">Magnesium</keyword>
<keyword id="KW-0479">Metal-binding</keyword>
<keyword id="KW-0547">Nucleotide-binding</keyword>
<keyword id="KW-0648">Protein biosynthesis</keyword>
<protein>
    <recommendedName>
        <fullName evidence="1">Phenylalanine--tRNA ligase alpha subunit</fullName>
        <ecNumber evidence="1">6.1.1.20</ecNumber>
    </recommendedName>
    <alternativeName>
        <fullName evidence="1">Phenylalanyl-tRNA synthetase alpha subunit</fullName>
        <shortName evidence="1">PheRS</shortName>
    </alternativeName>
</protein>
<reference key="1">
    <citation type="journal article" date="2008" name="J. Bacteriol.">
        <title>Complete genome sequence of the mosquitocidal bacterium Bacillus sphaericus C3-41 and comparison with those of closely related Bacillus species.</title>
        <authorList>
            <person name="Hu X."/>
            <person name="Fan W."/>
            <person name="Han B."/>
            <person name="Liu H."/>
            <person name="Zheng D."/>
            <person name="Li Q."/>
            <person name="Dong W."/>
            <person name="Yan J."/>
            <person name="Gao M."/>
            <person name="Berry C."/>
            <person name="Yuan Z."/>
        </authorList>
    </citation>
    <scope>NUCLEOTIDE SEQUENCE [LARGE SCALE GENOMIC DNA]</scope>
    <source>
        <strain>C3-41</strain>
    </source>
</reference>
<comment type="catalytic activity">
    <reaction evidence="1">
        <text>tRNA(Phe) + L-phenylalanine + ATP = L-phenylalanyl-tRNA(Phe) + AMP + diphosphate + H(+)</text>
        <dbReference type="Rhea" id="RHEA:19413"/>
        <dbReference type="Rhea" id="RHEA-COMP:9668"/>
        <dbReference type="Rhea" id="RHEA-COMP:9699"/>
        <dbReference type="ChEBI" id="CHEBI:15378"/>
        <dbReference type="ChEBI" id="CHEBI:30616"/>
        <dbReference type="ChEBI" id="CHEBI:33019"/>
        <dbReference type="ChEBI" id="CHEBI:58095"/>
        <dbReference type="ChEBI" id="CHEBI:78442"/>
        <dbReference type="ChEBI" id="CHEBI:78531"/>
        <dbReference type="ChEBI" id="CHEBI:456215"/>
        <dbReference type="EC" id="6.1.1.20"/>
    </reaction>
</comment>
<comment type="cofactor">
    <cofactor evidence="1">
        <name>Mg(2+)</name>
        <dbReference type="ChEBI" id="CHEBI:18420"/>
    </cofactor>
    <text evidence="1">Binds 2 magnesium ions per tetramer.</text>
</comment>
<comment type="subunit">
    <text evidence="1">Tetramer of two alpha and two beta subunits.</text>
</comment>
<comment type="subcellular location">
    <subcellularLocation>
        <location evidence="1">Cytoplasm</location>
    </subcellularLocation>
</comment>
<comment type="similarity">
    <text evidence="1">Belongs to the class-II aminoacyl-tRNA synthetase family. Phe-tRNA synthetase alpha subunit type 1 subfamily.</text>
</comment>
<sequence>MEEQLKQLEQEALAKIEAAASLKELNEVRVAYLGKKGPITDLLKGMGKLSAEERPKMGALVNNVRENVTAVLESKAAVLEEAAIAEKLASESIDVTLPGRAIKVGNRHPLTRVIEEIEDLFIGMGYEIAEGPEVEKDYYNFEALNLPKGHPARDMQDSFYISEEILLRTHTSPVQARTMEAKKGESIRIICPGKVFRRDNDDATHSHQFMQIEGLVIGENIRMSDLKGTLDTLAKKMFGAEREIRLRPSFFPFTEPSVEMDISCFKCGGAGCNVCKSTGWIEILGAGMVHPNVLEMAGYDPKKVSGFAFGIGAERIAMLKYGVDDIRHFYTSDTRFLSQFERTEA</sequence>
<proteinExistence type="inferred from homology"/>
<feature type="chain" id="PRO_1000114890" description="Phenylalanine--tRNA ligase alpha subunit">
    <location>
        <begin position="1"/>
        <end position="345"/>
    </location>
</feature>
<feature type="binding site" evidence="1">
    <location>
        <position position="255"/>
    </location>
    <ligand>
        <name>Mg(2+)</name>
        <dbReference type="ChEBI" id="CHEBI:18420"/>
        <note>shared with beta subunit</note>
    </ligand>
</feature>
<gene>
    <name evidence="1" type="primary">pheS</name>
    <name type="ordered locus">Bsph_4073</name>
</gene>
<name>SYFA_LYSSC</name>
<evidence type="ECO:0000255" key="1">
    <source>
        <dbReference type="HAMAP-Rule" id="MF_00281"/>
    </source>
</evidence>
<organism>
    <name type="scientific">Lysinibacillus sphaericus (strain C3-41)</name>
    <dbReference type="NCBI Taxonomy" id="444177"/>
    <lineage>
        <taxon>Bacteria</taxon>
        <taxon>Bacillati</taxon>
        <taxon>Bacillota</taxon>
        <taxon>Bacilli</taxon>
        <taxon>Bacillales</taxon>
        <taxon>Bacillaceae</taxon>
        <taxon>Lysinibacillus</taxon>
    </lineage>
</organism>
<accession>B1HWA2</accession>
<dbReference type="EC" id="6.1.1.20" evidence="1"/>
<dbReference type="EMBL" id="CP000817">
    <property type="protein sequence ID" value="ACA41541.1"/>
    <property type="molecule type" value="Genomic_DNA"/>
</dbReference>
<dbReference type="RefSeq" id="WP_012295579.1">
    <property type="nucleotide sequence ID" value="NC_010382.1"/>
</dbReference>
<dbReference type="SMR" id="B1HWA2"/>
<dbReference type="EnsemblBacteria" id="ACA41541">
    <property type="protein sequence ID" value="ACA41541"/>
    <property type="gene ID" value="Bsph_4073"/>
</dbReference>
<dbReference type="KEGG" id="lsp:Bsph_4073"/>
<dbReference type="HOGENOM" id="CLU_025086_0_1_9"/>
<dbReference type="Proteomes" id="UP000002164">
    <property type="component" value="Chromosome"/>
</dbReference>
<dbReference type="GO" id="GO:0005737">
    <property type="term" value="C:cytoplasm"/>
    <property type="evidence" value="ECO:0007669"/>
    <property type="project" value="UniProtKB-SubCell"/>
</dbReference>
<dbReference type="GO" id="GO:0005524">
    <property type="term" value="F:ATP binding"/>
    <property type="evidence" value="ECO:0007669"/>
    <property type="project" value="UniProtKB-UniRule"/>
</dbReference>
<dbReference type="GO" id="GO:0140096">
    <property type="term" value="F:catalytic activity, acting on a protein"/>
    <property type="evidence" value="ECO:0007669"/>
    <property type="project" value="UniProtKB-ARBA"/>
</dbReference>
<dbReference type="GO" id="GO:0000287">
    <property type="term" value="F:magnesium ion binding"/>
    <property type="evidence" value="ECO:0007669"/>
    <property type="project" value="UniProtKB-UniRule"/>
</dbReference>
<dbReference type="GO" id="GO:0004826">
    <property type="term" value="F:phenylalanine-tRNA ligase activity"/>
    <property type="evidence" value="ECO:0007669"/>
    <property type="project" value="UniProtKB-UniRule"/>
</dbReference>
<dbReference type="GO" id="GO:0016740">
    <property type="term" value="F:transferase activity"/>
    <property type="evidence" value="ECO:0007669"/>
    <property type="project" value="UniProtKB-ARBA"/>
</dbReference>
<dbReference type="GO" id="GO:0000049">
    <property type="term" value="F:tRNA binding"/>
    <property type="evidence" value="ECO:0007669"/>
    <property type="project" value="InterPro"/>
</dbReference>
<dbReference type="GO" id="GO:0006432">
    <property type="term" value="P:phenylalanyl-tRNA aminoacylation"/>
    <property type="evidence" value="ECO:0007669"/>
    <property type="project" value="UniProtKB-UniRule"/>
</dbReference>
<dbReference type="CDD" id="cd00496">
    <property type="entry name" value="PheRS_alpha_core"/>
    <property type="match status" value="1"/>
</dbReference>
<dbReference type="FunFam" id="3.30.930.10:FF:000003">
    <property type="entry name" value="Phenylalanine--tRNA ligase alpha subunit"/>
    <property type="match status" value="1"/>
</dbReference>
<dbReference type="Gene3D" id="3.30.930.10">
    <property type="entry name" value="Bira Bifunctional Protein, Domain 2"/>
    <property type="match status" value="1"/>
</dbReference>
<dbReference type="HAMAP" id="MF_00281">
    <property type="entry name" value="Phe_tRNA_synth_alpha1"/>
    <property type="match status" value="1"/>
</dbReference>
<dbReference type="InterPro" id="IPR006195">
    <property type="entry name" value="aa-tRNA-synth_II"/>
</dbReference>
<dbReference type="InterPro" id="IPR045864">
    <property type="entry name" value="aa-tRNA-synth_II/BPL/LPL"/>
</dbReference>
<dbReference type="InterPro" id="IPR004529">
    <property type="entry name" value="Phe-tRNA-synth_IIc_asu"/>
</dbReference>
<dbReference type="InterPro" id="IPR004188">
    <property type="entry name" value="Phe-tRNA_ligase_II_N"/>
</dbReference>
<dbReference type="InterPro" id="IPR022911">
    <property type="entry name" value="Phe_tRNA_ligase_alpha1_bac"/>
</dbReference>
<dbReference type="InterPro" id="IPR002319">
    <property type="entry name" value="Phenylalanyl-tRNA_Synthase"/>
</dbReference>
<dbReference type="InterPro" id="IPR010978">
    <property type="entry name" value="tRNA-bd_arm"/>
</dbReference>
<dbReference type="NCBIfam" id="TIGR00468">
    <property type="entry name" value="pheS"/>
    <property type="match status" value="1"/>
</dbReference>
<dbReference type="PANTHER" id="PTHR11538:SF41">
    <property type="entry name" value="PHENYLALANINE--TRNA LIGASE, MITOCHONDRIAL"/>
    <property type="match status" value="1"/>
</dbReference>
<dbReference type="PANTHER" id="PTHR11538">
    <property type="entry name" value="PHENYLALANYL-TRNA SYNTHETASE"/>
    <property type="match status" value="1"/>
</dbReference>
<dbReference type="Pfam" id="PF02912">
    <property type="entry name" value="Phe_tRNA-synt_N"/>
    <property type="match status" value="1"/>
</dbReference>
<dbReference type="Pfam" id="PF01409">
    <property type="entry name" value="tRNA-synt_2d"/>
    <property type="match status" value="1"/>
</dbReference>
<dbReference type="SUPFAM" id="SSF55681">
    <property type="entry name" value="Class II aaRS and biotin synthetases"/>
    <property type="match status" value="1"/>
</dbReference>
<dbReference type="SUPFAM" id="SSF46589">
    <property type="entry name" value="tRNA-binding arm"/>
    <property type="match status" value="1"/>
</dbReference>
<dbReference type="PROSITE" id="PS50862">
    <property type="entry name" value="AA_TRNA_LIGASE_II"/>
    <property type="match status" value="1"/>
</dbReference>